<accession>Q7NPZ0</accession>
<evidence type="ECO:0000255" key="1">
    <source>
        <dbReference type="HAMAP-Rule" id="MF_01008"/>
    </source>
</evidence>
<evidence type="ECO:0000255" key="2">
    <source>
        <dbReference type="PROSITE-ProRule" id="PRU01076"/>
    </source>
</evidence>
<protein>
    <recommendedName>
        <fullName>Transcriptional regulator MraZ</fullName>
    </recommendedName>
</protein>
<proteinExistence type="inferred from homology"/>
<comment type="subunit">
    <text evidence="1">Forms oligomers.</text>
</comment>
<comment type="subcellular location">
    <subcellularLocation>
        <location evidence="1">Cytoplasm</location>
        <location evidence="1">Nucleoid</location>
    </subcellularLocation>
</comment>
<comment type="similarity">
    <text evidence="1">Belongs to the MraZ family.</text>
</comment>
<organism>
    <name type="scientific">Chromobacterium violaceum (strain ATCC 12472 / DSM 30191 / JCM 1249 / CCUG 213 / NBRC 12614 / NCIMB 9131 / NCTC 9757 / MK)</name>
    <dbReference type="NCBI Taxonomy" id="243365"/>
    <lineage>
        <taxon>Bacteria</taxon>
        <taxon>Pseudomonadati</taxon>
        <taxon>Pseudomonadota</taxon>
        <taxon>Betaproteobacteria</taxon>
        <taxon>Neisseriales</taxon>
        <taxon>Chromobacteriaceae</taxon>
        <taxon>Chromobacterium</taxon>
    </lineage>
</organism>
<sequence>MIGGVSILSLDSKGRLAIPAKHRETLLSAFGHKLVVTLESQDHLLLYPEPNWRPVEARLLALPTGNPTLKRYQRLVLGHAETLEMDSAGRVLLPARLRELTALDKDVALVGMGNRFELWNAEEWDSQTADALAIDQADLAQHLGDFTL</sequence>
<feature type="chain" id="PRO_0000108469" description="Transcriptional regulator MraZ">
    <location>
        <begin position="1"/>
        <end position="148"/>
    </location>
</feature>
<feature type="domain" description="SpoVT-AbrB 1" evidence="2">
    <location>
        <begin position="5"/>
        <end position="51"/>
    </location>
</feature>
<feature type="domain" description="SpoVT-AbrB 2" evidence="2">
    <location>
        <begin position="80"/>
        <end position="123"/>
    </location>
</feature>
<dbReference type="EMBL" id="AE016825">
    <property type="protein sequence ID" value="AAQ62011.1"/>
    <property type="molecule type" value="Genomic_DNA"/>
</dbReference>
<dbReference type="RefSeq" id="WP_011137898.1">
    <property type="nucleotide sequence ID" value="NC_005085.1"/>
</dbReference>
<dbReference type="SMR" id="Q7NPZ0"/>
<dbReference type="STRING" id="243365.CV_4352"/>
<dbReference type="GeneID" id="97477195"/>
<dbReference type="KEGG" id="cvi:CV_4352"/>
<dbReference type="eggNOG" id="COG2001">
    <property type="taxonomic scope" value="Bacteria"/>
</dbReference>
<dbReference type="HOGENOM" id="CLU_107907_2_0_4"/>
<dbReference type="OrthoDB" id="9807753at2"/>
<dbReference type="Proteomes" id="UP000001424">
    <property type="component" value="Chromosome"/>
</dbReference>
<dbReference type="GO" id="GO:0005737">
    <property type="term" value="C:cytoplasm"/>
    <property type="evidence" value="ECO:0007669"/>
    <property type="project" value="UniProtKB-UniRule"/>
</dbReference>
<dbReference type="GO" id="GO:0009295">
    <property type="term" value="C:nucleoid"/>
    <property type="evidence" value="ECO:0007669"/>
    <property type="project" value="UniProtKB-SubCell"/>
</dbReference>
<dbReference type="GO" id="GO:0003700">
    <property type="term" value="F:DNA-binding transcription factor activity"/>
    <property type="evidence" value="ECO:0007669"/>
    <property type="project" value="UniProtKB-UniRule"/>
</dbReference>
<dbReference type="GO" id="GO:0000976">
    <property type="term" value="F:transcription cis-regulatory region binding"/>
    <property type="evidence" value="ECO:0007669"/>
    <property type="project" value="TreeGrafter"/>
</dbReference>
<dbReference type="GO" id="GO:2000143">
    <property type="term" value="P:negative regulation of DNA-templated transcription initiation"/>
    <property type="evidence" value="ECO:0007669"/>
    <property type="project" value="TreeGrafter"/>
</dbReference>
<dbReference type="CDD" id="cd16321">
    <property type="entry name" value="MraZ_C"/>
    <property type="match status" value="1"/>
</dbReference>
<dbReference type="CDD" id="cd16320">
    <property type="entry name" value="MraZ_N"/>
    <property type="match status" value="1"/>
</dbReference>
<dbReference type="Gene3D" id="3.40.1550.20">
    <property type="entry name" value="Transcriptional regulator MraZ domain"/>
    <property type="match status" value="1"/>
</dbReference>
<dbReference type="HAMAP" id="MF_01008">
    <property type="entry name" value="MraZ"/>
    <property type="match status" value="1"/>
</dbReference>
<dbReference type="InterPro" id="IPR003444">
    <property type="entry name" value="MraZ"/>
</dbReference>
<dbReference type="InterPro" id="IPR035644">
    <property type="entry name" value="MraZ_C"/>
</dbReference>
<dbReference type="InterPro" id="IPR020603">
    <property type="entry name" value="MraZ_dom"/>
</dbReference>
<dbReference type="InterPro" id="IPR035642">
    <property type="entry name" value="MraZ_N"/>
</dbReference>
<dbReference type="InterPro" id="IPR038619">
    <property type="entry name" value="MraZ_sf"/>
</dbReference>
<dbReference type="InterPro" id="IPR007159">
    <property type="entry name" value="SpoVT-AbrB_dom"/>
</dbReference>
<dbReference type="InterPro" id="IPR037914">
    <property type="entry name" value="SpoVT-AbrB_sf"/>
</dbReference>
<dbReference type="NCBIfam" id="TIGR00242">
    <property type="entry name" value="division/cell wall cluster transcriptional repressor MraZ"/>
    <property type="match status" value="1"/>
</dbReference>
<dbReference type="PANTHER" id="PTHR34701">
    <property type="entry name" value="TRANSCRIPTIONAL REGULATOR MRAZ"/>
    <property type="match status" value="1"/>
</dbReference>
<dbReference type="PANTHER" id="PTHR34701:SF1">
    <property type="entry name" value="TRANSCRIPTIONAL REGULATOR MRAZ"/>
    <property type="match status" value="1"/>
</dbReference>
<dbReference type="Pfam" id="PF02381">
    <property type="entry name" value="MraZ"/>
    <property type="match status" value="2"/>
</dbReference>
<dbReference type="SUPFAM" id="SSF89447">
    <property type="entry name" value="AbrB/MazE/MraZ-like"/>
    <property type="match status" value="1"/>
</dbReference>
<dbReference type="PROSITE" id="PS51740">
    <property type="entry name" value="SPOVT_ABRB"/>
    <property type="match status" value="2"/>
</dbReference>
<gene>
    <name evidence="1" type="primary">mraZ</name>
    <name type="ordered locus">CV_4352</name>
</gene>
<reference key="1">
    <citation type="journal article" date="2003" name="Proc. Natl. Acad. Sci. U.S.A.">
        <title>The complete genome sequence of Chromobacterium violaceum reveals remarkable and exploitable bacterial adaptability.</title>
        <authorList>
            <person name="Vasconcelos A.T.R."/>
            <person name="de Almeida D.F."/>
            <person name="Hungria M."/>
            <person name="Guimaraes C.T."/>
            <person name="Antonio R.V."/>
            <person name="Almeida F.C."/>
            <person name="de Almeida L.G.P."/>
            <person name="de Almeida R."/>
            <person name="Alves-Gomes J.A."/>
            <person name="Andrade E.M."/>
            <person name="Araripe J."/>
            <person name="de Araujo M.F.F."/>
            <person name="Astolfi-Filho S."/>
            <person name="Azevedo V."/>
            <person name="Baptista A.J."/>
            <person name="Bataus L.A.M."/>
            <person name="Batista J.S."/>
            <person name="Belo A."/>
            <person name="van den Berg C."/>
            <person name="Bogo M."/>
            <person name="Bonatto S."/>
            <person name="Bordignon J."/>
            <person name="Brigido M.M."/>
            <person name="Brito C.A."/>
            <person name="Brocchi M."/>
            <person name="Burity H.A."/>
            <person name="Camargo A.A."/>
            <person name="Cardoso D.D.P."/>
            <person name="Carneiro N.P."/>
            <person name="Carraro D.M."/>
            <person name="Carvalho C.M.B."/>
            <person name="Cascardo J.C.M."/>
            <person name="Cavada B.S."/>
            <person name="Chueire L.M.O."/>
            <person name="Creczynski-Pasa T.B."/>
            <person name="Cunha-Junior N.C."/>
            <person name="Fagundes N."/>
            <person name="Falcao C.L."/>
            <person name="Fantinatti F."/>
            <person name="Farias I.P."/>
            <person name="Felipe M.S.S."/>
            <person name="Ferrari L.P."/>
            <person name="Ferro J.A."/>
            <person name="Ferro M.I.T."/>
            <person name="Franco G.R."/>
            <person name="Freitas N.S.A."/>
            <person name="Furlan L.R."/>
            <person name="Gazzinelli R.T."/>
            <person name="Gomes E.A."/>
            <person name="Goncalves P.R."/>
            <person name="Grangeiro T.B."/>
            <person name="Grattapaglia D."/>
            <person name="Grisard E.C."/>
            <person name="Hanna E.S."/>
            <person name="Jardim S.N."/>
            <person name="Laurino J."/>
            <person name="Leoi L.C.T."/>
            <person name="Lima L.F.A."/>
            <person name="Loureiro M.F."/>
            <person name="Lyra M.C.C.P."/>
            <person name="Madeira H.M.F."/>
            <person name="Manfio G.P."/>
            <person name="Maranhao A.Q."/>
            <person name="Martins W.S."/>
            <person name="di Mauro S.M.Z."/>
            <person name="de Medeiros S.R.B."/>
            <person name="Meissner R.V."/>
            <person name="Moreira M.A.M."/>
            <person name="Nascimento F.F."/>
            <person name="Nicolas M.F."/>
            <person name="Oliveira J.G."/>
            <person name="Oliveira S.C."/>
            <person name="Paixao R.F.C."/>
            <person name="Parente J.A."/>
            <person name="Pedrosa F.O."/>
            <person name="Pena S.D.J."/>
            <person name="Pereira J.O."/>
            <person name="Pereira M."/>
            <person name="Pinto L.S.R.C."/>
            <person name="Pinto L.S."/>
            <person name="Porto J.I.R."/>
            <person name="Potrich D.P."/>
            <person name="Ramalho-Neto C.E."/>
            <person name="Reis A.M.M."/>
            <person name="Rigo L.U."/>
            <person name="Rondinelli E."/>
            <person name="Santos E.B.P."/>
            <person name="Santos F.R."/>
            <person name="Schneider M.P.C."/>
            <person name="Seuanez H.N."/>
            <person name="Silva A.M.R."/>
            <person name="da Silva A.L.C."/>
            <person name="Silva D.W."/>
            <person name="Silva R."/>
            <person name="Simoes I.C."/>
            <person name="Simon D."/>
            <person name="Soares C.M.A."/>
            <person name="Soares R.B.A."/>
            <person name="Souza E.M."/>
            <person name="Souza K.R.L."/>
            <person name="Souza R.C."/>
            <person name="Steffens M.B.R."/>
            <person name="Steindel M."/>
            <person name="Teixeira S.R."/>
            <person name="Urmenyi T."/>
            <person name="Vettore A."/>
            <person name="Wassem R."/>
            <person name="Zaha A."/>
            <person name="Simpson A.J.G."/>
        </authorList>
    </citation>
    <scope>NUCLEOTIDE SEQUENCE [LARGE SCALE GENOMIC DNA]</scope>
    <source>
        <strain>ATCC 12472 / DSM 30191 / JCM 1249 / CCUG 213 / NBRC 12614 / NCIMB 9131 / NCTC 9757 / MK</strain>
    </source>
</reference>
<keyword id="KW-0963">Cytoplasm</keyword>
<keyword id="KW-0238">DNA-binding</keyword>
<keyword id="KW-1185">Reference proteome</keyword>
<keyword id="KW-0677">Repeat</keyword>
<keyword id="KW-0804">Transcription</keyword>
<keyword id="KW-0805">Transcription regulation</keyword>
<name>MRAZ_CHRVO</name>